<sequence length="140" mass="16487">MADGRPATLDDFCRRFDISFFDLRLTCIFCSHTVDLADLALFYLKKLSLVFRGNCYYACCSECLRLSALFEQENYFQCSIKAVHLEEIAQKKIKEICIRCICCLRLLDIVEKLDLLYSDETCYLIRGLWRGYCRNCIRKQ</sequence>
<gene>
    <name evidence="1" type="primary">E6</name>
</gene>
<keyword id="KW-0010">Activator</keyword>
<keyword id="KW-0238">DNA-binding</keyword>
<keyword id="KW-0244">Early protein</keyword>
<keyword id="KW-1035">Host cytoplasm</keyword>
<keyword id="KW-1048">Host nucleus</keyword>
<keyword id="KW-0945">Host-virus interaction</keyword>
<keyword id="KW-1090">Inhibition of host innate immune response by virus</keyword>
<keyword id="KW-0479">Metal-binding</keyword>
<keyword id="KW-1119">Modulation of host cell apoptosis by virus</keyword>
<keyword id="KW-1185">Reference proteome</keyword>
<keyword id="KW-0804">Transcription</keyword>
<keyword id="KW-0805">Transcription regulation</keyword>
<keyword id="KW-0899">Viral immunoevasion</keyword>
<keyword id="KW-0862">Zinc</keyword>
<keyword id="KW-0863">Zinc-finger</keyword>
<reference key="1">
    <citation type="journal article" date="1993" name="Virology">
        <title>Two novel types of human papillomavirus, HPV 63 and HPV 65: comparisons of their clinical and histological features and DNA sequences to other HPV types.</title>
        <authorList>
            <person name="Egawa K."/>
            <person name="Delius H."/>
            <person name="Matsukura T."/>
            <person name="Kawashima M."/>
            <person name="de Villiers E.M."/>
        </authorList>
    </citation>
    <scope>NUCLEOTIDE SEQUENCE [GENOMIC DNA]</scope>
</reference>
<proteinExistence type="inferred from homology"/>
<organism>
    <name type="scientific">Human papillomavirus 4</name>
    <dbReference type="NCBI Taxonomy" id="10617"/>
    <lineage>
        <taxon>Viruses</taxon>
        <taxon>Monodnaviria</taxon>
        <taxon>Shotokuvirae</taxon>
        <taxon>Cossaviricota</taxon>
        <taxon>Papovaviricetes</taxon>
        <taxon>Zurhausenvirales</taxon>
        <taxon>Papillomaviridae</taxon>
        <taxon>Firstpapillomavirinae</taxon>
        <taxon>Gammapapillomavirus</taxon>
        <taxon>Gammapapillomavirus 1</taxon>
    </lineage>
</organism>
<organismHost>
    <name type="scientific">Homo sapiens</name>
    <name type="common">Human</name>
    <dbReference type="NCBI Taxonomy" id="9606"/>
</organismHost>
<dbReference type="EMBL" id="X70827">
    <property type="protein sequence ID" value="CAA50157.1"/>
    <property type="molecule type" value="Genomic_DNA"/>
</dbReference>
<dbReference type="RefSeq" id="NP_040889.1">
    <property type="nucleotide sequence ID" value="NC_001457.1"/>
</dbReference>
<dbReference type="SMR" id="Q07854"/>
<dbReference type="BioGRID" id="3509173">
    <property type="interactions" value="1"/>
</dbReference>
<dbReference type="KEGG" id="vg:1489450"/>
<dbReference type="OrthoDB" id="27353at10239"/>
<dbReference type="Proteomes" id="UP000009253">
    <property type="component" value="Genome"/>
</dbReference>
<dbReference type="GO" id="GO:0030430">
    <property type="term" value="C:host cell cytoplasm"/>
    <property type="evidence" value="ECO:0007669"/>
    <property type="project" value="UniProtKB-SubCell"/>
</dbReference>
<dbReference type="GO" id="GO:0042025">
    <property type="term" value="C:host cell nucleus"/>
    <property type="evidence" value="ECO:0007669"/>
    <property type="project" value="UniProtKB-SubCell"/>
</dbReference>
<dbReference type="GO" id="GO:0003677">
    <property type="term" value="F:DNA binding"/>
    <property type="evidence" value="ECO:0007669"/>
    <property type="project" value="UniProtKB-UniRule"/>
</dbReference>
<dbReference type="GO" id="GO:0008270">
    <property type="term" value="F:zinc ion binding"/>
    <property type="evidence" value="ECO:0007669"/>
    <property type="project" value="UniProtKB-KW"/>
</dbReference>
<dbReference type="GO" id="GO:0006351">
    <property type="term" value="P:DNA-templated transcription"/>
    <property type="evidence" value="ECO:0007669"/>
    <property type="project" value="UniProtKB-UniRule"/>
</dbReference>
<dbReference type="GO" id="GO:0006355">
    <property type="term" value="P:regulation of DNA-templated transcription"/>
    <property type="evidence" value="ECO:0007669"/>
    <property type="project" value="UniProtKB-UniRule"/>
</dbReference>
<dbReference type="GO" id="GO:0052150">
    <property type="term" value="P:symbiont-mediated perturbation of host apoptosis"/>
    <property type="evidence" value="ECO:0007669"/>
    <property type="project" value="UniProtKB-KW"/>
</dbReference>
<dbReference type="GO" id="GO:0039648">
    <property type="term" value="P:symbiont-mediated perturbation of host ubiquitin-like protein modification"/>
    <property type="evidence" value="ECO:0007669"/>
    <property type="project" value="UniProtKB-UniRule"/>
</dbReference>
<dbReference type="GO" id="GO:0052170">
    <property type="term" value="P:symbiont-mediated suppression of host innate immune response"/>
    <property type="evidence" value="ECO:0007669"/>
    <property type="project" value="UniProtKB-KW"/>
</dbReference>
<dbReference type="GO" id="GO:0039502">
    <property type="term" value="P:symbiont-mediated suppression of host type I interferon-mediated signaling pathway"/>
    <property type="evidence" value="ECO:0007669"/>
    <property type="project" value="UniProtKB-UniRule"/>
</dbReference>
<dbReference type="Gene3D" id="3.30.240.40">
    <property type="entry name" value="E6 early regulatory protein"/>
    <property type="match status" value="2"/>
</dbReference>
<dbReference type="HAMAP" id="MF_04006">
    <property type="entry name" value="HPV_E6"/>
    <property type="match status" value="1"/>
</dbReference>
<dbReference type="InterPro" id="IPR001334">
    <property type="entry name" value="E6"/>
</dbReference>
<dbReference type="InterPro" id="IPR038575">
    <property type="entry name" value="E6_sf"/>
</dbReference>
<dbReference type="Pfam" id="PF00518">
    <property type="entry name" value="E6"/>
    <property type="match status" value="1"/>
</dbReference>
<dbReference type="SUPFAM" id="SSF161229">
    <property type="entry name" value="E6 C-terminal domain-like"/>
    <property type="match status" value="2"/>
</dbReference>
<accession>Q07854</accession>
<comment type="function">
    <text evidence="1">Plays a major role in the induction and maintenance of cellular transformation. E6 associates with host UBE3A/E6-AP ubiquitin-protein ligase and modulates its activity. Protects host keratinocytes from apoptosis by mediating the degradation of host BAK1. May also inhibit host immune response.</text>
</comment>
<comment type="subunit">
    <text evidence="1">Forms homodimers. Interacts with ubiquitin-protein ligase UBE3A/E6-AP; this interaction stimulates UBE3A ubiquitin activity. Interacts with host BAK1.</text>
</comment>
<comment type="subcellular location">
    <subcellularLocation>
        <location evidence="1">Host cytoplasm</location>
    </subcellularLocation>
    <subcellularLocation>
        <location evidence="1">Host nucleus</location>
    </subcellularLocation>
</comment>
<comment type="similarity">
    <text evidence="1 2">Belongs to the papillomaviridae E6 protein family.</text>
</comment>
<protein>
    <recommendedName>
        <fullName evidence="1">Protein E6</fullName>
    </recommendedName>
</protein>
<name>VE6_HPV04</name>
<evidence type="ECO:0000255" key="1">
    <source>
        <dbReference type="HAMAP-Rule" id="MF_04006"/>
    </source>
</evidence>
<evidence type="ECO:0000305" key="2"/>
<feature type="chain" id="PRO_0000133322" description="Protein E6">
    <location>
        <begin position="1"/>
        <end position="140"/>
    </location>
</feature>
<feature type="zinc finger region" evidence="1">
    <location>
        <begin position="27"/>
        <end position="63"/>
    </location>
</feature>
<feature type="zinc finger region" evidence="1">
    <location>
        <begin position="100"/>
        <end position="136"/>
    </location>
</feature>